<accession>P42719</accession>
<feature type="chain" id="PRO_0000110728" description="Orotate phosphoribosyltransferase">
    <location>
        <begin position="1"/>
        <end position="223"/>
    </location>
</feature>
<feature type="region of interest" description="Disordered" evidence="2">
    <location>
        <begin position="192"/>
        <end position="212"/>
    </location>
</feature>
<feature type="compositionally biased region" description="Low complexity" evidence="2">
    <location>
        <begin position="192"/>
        <end position="211"/>
    </location>
</feature>
<feature type="binding site" evidence="1">
    <location>
        <position position="107"/>
    </location>
    <ligand>
        <name>5-phospho-alpha-D-ribose 1-diphosphate</name>
        <dbReference type="ChEBI" id="CHEBI:58017"/>
        <note>ligand shared between dimeric partners</note>
    </ligand>
</feature>
<feature type="binding site" description="in other chain" evidence="1">
    <location>
        <position position="108"/>
    </location>
    <ligand>
        <name>5-phospho-alpha-D-ribose 1-diphosphate</name>
        <dbReference type="ChEBI" id="CHEBI:58017"/>
        <note>ligand shared between dimeric partners</note>
    </ligand>
</feature>
<feature type="binding site" evidence="1">
    <location>
        <position position="111"/>
    </location>
    <ligand>
        <name>5-phospho-alpha-D-ribose 1-diphosphate</name>
        <dbReference type="ChEBI" id="CHEBI:58017"/>
        <note>ligand shared between dimeric partners</note>
    </ligand>
</feature>
<feature type="binding site" evidence="1">
    <location>
        <position position="113"/>
    </location>
    <ligand>
        <name>5-phospho-alpha-D-ribose 1-diphosphate</name>
        <dbReference type="ChEBI" id="CHEBI:58017"/>
        <note>ligand shared between dimeric partners</note>
    </ligand>
</feature>
<feature type="binding site" description="in other chain" evidence="1">
    <location>
        <begin position="133"/>
        <end position="141"/>
    </location>
    <ligand>
        <name>5-phospho-alpha-D-ribose 1-diphosphate</name>
        <dbReference type="ChEBI" id="CHEBI:58017"/>
        <note>ligand shared between dimeric partners</note>
    </ligand>
</feature>
<feature type="binding site" evidence="1">
    <location>
        <position position="137"/>
    </location>
    <ligand>
        <name>orotate</name>
        <dbReference type="ChEBI" id="CHEBI:30839"/>
    </ligand>
</feature>
<comment type="function">
    <text evidence="1 3">Catalyzes the transfer of a ribosyl phosphate group from 5-phosphoribose 1-diphosphate to orotate, leading to the formation of orotidine monophosphate (OMP).</text>
</comment>
<comment type="catalytic activity">
    <reaction>
        <text>orotidine 5'-phosphate + diphosphate = orotate + 5-phospho-alpha-D-ribose 1-diphosphate</text>
        <dbReference type="Rhea" id="RHEA:10380"/>
        <dbReference type="ChEBI" id="CHEBI:30839"/>
        <dbReference type="ChEBI" id="CHEBI:33019"/>
        <dbReference type="ChEBI" id="CHEBI:57538"/>
        <dbReference type="ChEBI" id="CHEBI:58017"/>
        <dbReference type="EC" id="2.4.2.10"/>
    </reaction>
</comment>
<comment type="cofactor">
    <cofactor evidence="1">
        <name>Mg(2+)</name>
        <dbReference type="ChEBI" id="CHEBI:18420"/>
    </cofactor>
</comment>
<comment type="biophysicochemical properties">
    <kinetics>
        <KM evidence="3">27.6 uM for orotate</KM>
        <Vmax evidence="3">120.0 umol/min/mg enzyme</Vmax>
    </kinetics>
    <phDependence>
        <text evidence="3">Optimum pH is 10.</text>
    </phDependence>
</comment>
<comment type="pathway">
    <text>Pyrimidine metabolism; UMP biosynthesis via de novo pathway; UMP from orotate: step 1/2.</text>
</comment>
<comment type="subunit">
    <text evidence="1">Homodimer.</text>
</comment>
<comment type="similarity">
    <text evidence="4">Belongs to the purine/pyrimidine phosphoribosyltransferase family. PyrE subfamily.</text>
</comment>
<name>PYRE_RHILT</name>
<dbReference type="EC" id="2.4.2.10"/>
<dbReference type="EMBL" id="U08434">
    <property type="protein sequence ID" value="AAB52372.1"/>
    <property type="molecule type" value="Unassigned_DNA"/>
</dbReference>
<dbReference type="SMR" id="P42719"/>
<dbReference type="UniPathway" id="UPA00070">
    <property type="reaction ID" value="UER00119"/>
</dbReference>
<dbReference type="GO" id="GO:0000287">
    <property type="term" value="F:magnesium ion binding"/>
    <property type="evidence" value="ECO:0007669"/>
    <property type="project" value="UniProtKB-UniRule"/>
</dbReference>
<dbReference type="GO" id="GO:0004588">
    <property type="term" value="F:orotate phosphoribosyltransferase activity"/>
    <property type="evidence" value="ECO:0007669"/>
    <property type="project" value="UniProtKB-UniRule"/>
</dbReference>
<dbReference type="GO" id="GO:0044205">
    <property type="term" value="P:'de novo' UMP biosynthetic process"/>
    <property type="evidence" value="ECO:0007669"/>
    <property type="project" value="UniProtKB-UniRule"/>
</dbReference>
<dbReference type="GO" id="GO:0019856">
    <property type="term" value="P:pyrimidine nucleobase biosynthetic process"/>
    <property type="evidence" value="ECO:0007669"/>
    <property type="project" value="TreeGrafter"/>
</dbReference>
<dbReference type="CDD" id="cd06223">
    <property type="entry name" value="PRTases_typeI"/>
    <property type="match status" value="1"/>
</dbReference>
<dbReference type="Gene3D" id="3.40.50.2020">
    <property type="match status" value="1"/>
</dbReference>
<dbReference type="HAMAP" id="MF_01208">
    <property type="entry name" value="PyrE"/>
    <property type="match status" value="1"/>
</dbReference>
<dbReference type="InterPro" id="IPR023031">
    <property type="entry name" value="OPRT"/>
</dbReference>
<dbReference type="InterPro" id="IPR004467">
    <property type="entry name" value="Or_phspho_trans_dom"/>
</dbReference>
<dbReference type="InterPro" id="IPR000836">
    <property type="entry name" value="PRibTrfase_dom"/>
</dbReference>
<dbReference type="InterPro" id="IPR029057">
    <property type="entry name" value="PRTase-like"/>
</dbReference>
<dbReference type="NCBIfam" id="NF001729">
    <property type="entry name" value="PRK00455.1-3"/>
    <property type="match status" value="1"/>
</dbReference>
<dbReference type="NCBIfam" id="TIGR00336">
    <property type="entry name" value="pyrE"/>
    <property type="match status" value="1"/>
</dbReference>
<dbReference type="PANTHER" id="PTHR19278">
    <property type="entry name" value="OROTATE PHOSPHORIBOSYLTRANSFERASE"/>
    <property type="match status" value="1"/>
</dbReference>
<dbReference type="PANTHER" id="PTHR19278:SF9">
    <property type="entry name" value="URIDINE 5'-MONOPHOSPHATE SYNTHASE"/>
    <property type="match status" value="1"/>
</dbReference>
<dbReference type="Pfam" id="PF00156">
    <property type="entry name" value="Pribosyltran"/>
    <property type="match status" value="1"/>
</dbReference>
<dbReference type="SUPFAM" id="SSF53271">
    <property type="entry name" value="PRTase-like"/>
    <property type="match status" value="1"/>
</dbReference>
<organism>
    <name type="scientific">Rhizobium leguminosarum bv. trifolii</name>
    <dbReference type="NCBI Taxonomy" id="386"/>
    <lineage>
        <taxon>Bacteria</taxon>
        <taxon>Pseudomonadati</taxon>
        <taxon>Pseudomonadota</taxon>
        <taxon>Alphaproteobacteria</taxon>
        <taxon>Hyphomicrobiales</taxon>
        <taxon>Rhizobiaceae</taxon>
        <taxon>Rhizobium/Agrobacterium group</taxon>
        <taxon>Rhizobium</taxon>
    </lineage>
</organism>
<gene>
    <name type="primary">pyrE</name>
</gene>
<proteinExistence type="evidence at protein level"/>
<sequence>MIQTTFPDRAVMAELLAKMLWEIKAVHFNAAQPYKLASGMASPVYIDCRKLLSFPRIRSTVMDFAASTLLRDAGFEQFDCIAGGETAGIPFAALLADRLGLPMIYVRKQPKGHGRNAQIEGNMPEGSRVLVIEDLTTAGGSMFKFIDAVRAAGGIVDHGIALFFYGIFGEQRFADGKVRLHHIATWRNVLPSPGSRSSSTTRRCRKSSPSSMRRWLGRERMVA</sequence>
<reference key="1">
    <citation type="journal article" date="1997" name="Gene">
        <title>Sequence and phylogenetic analysis of the Rhizobium leguminosarum biovar trifolii pyrE gene, overproduction, purification and characterization of orotate phosphoribosyltransferase.</title>
        <authorList>
            <person name="Bayles D.O."/>
            <person name="Fennington G.J. Jr."/>
            <person name="Hughes T.A."/>
        </authorList>
    </citation>
    <scope>NUCLEOTIDE SEQUENCE [GENOMIC DNA]</scope>
    <scope>FUNCTION</scope>
    <scope>BIOPHYSICOCHEMICAL PROPERTIES</scope>
</reference>
<evidence type="ECO:0000250" key="1"/>
<evidence type="ECO:0000256" key="2">
    <source>
        <dbReference type="SAM" id="MobiDB-lite"/>
    </source>
</evidence>
<evidence type="ECO:0000269" key="3">
    <source>
    </source>
</evidence>
<evidence type="ECO:0000305" key="4"/>
<protein>
    <recommendedName>
        <fullName>Orotate phosphoribosyltransferase</fullName>
        <shortName>OPRT</shortName>
        <shortName>OPRTase</shortName>
        <ecNumber>2.4.2.10</ecNumber>
    </recommendedName>
</protein>
<keyword id="KW-0328">Glycosyltransferase</keyword>
<keyword id="KW-0460">Magnesium</keyword>
<keyword id="KW-0665">Pyrimidine biosynthesis</keyword>
<keyword id="KW-0808">Transferase</keyword>